<proteinExistence type="inferred from homology"/>
<evidence type="ECO:0000250" key="1"/>
<evidence type="ECO:0000250" key="2">
    <source>
        <dbReference type="UniProtKB" id="P00157"/>
    </source>
</evidence>
<evidence type="ECO:0000255" key="3">
    <source>
        <dbReference type="PROSITE-ProRule" id="PRU00968"/>
    </source>
</evidence>
<geneLocation type="mitochondrion"/>
<dbReference type="EMBL" id="AF039268">
    <property type="protein sequence ID" value="AAC33545.1"/>
    <property type="molecule type" value="Genomic_DNA"/>
</dbReference>
<dbReference type="EMBL" id="U96022">
    <property type="protein sequence ID" value="AAC24738.1"/>
    <property type="molecule type" value="Genomic_DNA"/>
</dbReference>
<dbReference type="SMR" id="P92845"/>
<dbReference type="GO" id="GO:0005743">
    <property type="term" value="C:mitochondrial inner membrane"/>
    <property type="evidence" value="ECO:0007669"/>
    <property type="project" value="UniProtKB-SubCell"/>
</dbReference>
<dbReference type="GO" id="GO:0046872">
    <property type="term" value="F:metal ion binding"/>
    <property type="evidence" value="ECO:0007669"/>
    <property type="project" value="UniProtKB-KW"/>
</dbReference>
<dbReference type="GO" id="GO:0008121">
    <property type="term" value="F:ubiquinol-cytochrome-c reductase activity"/>
    <property type="evidence" value="ECO:0007669"/>
    <property type="project" value="TreeGrafter"/>
</dbReference>
<dbReference type="GO" id="GO:0006122">
    <property type="term" value="P:mitochondrial electron transport, ubiquinol to cytochrome c"/>
    <property type="evidence" value="ECO:0007669"/>
    <property type="project" value="TreeGrafter"/>
</dbReference>
<dbReference type="CDD" id="cd00284">
    <property type="entry name" value="Cytochrome_b_N"/>
    <property type="match status" value="1"/>
</dbReference>
<dbReference type="Gene3D" id="1.20.810.10">
    <property type="entry name" value="Cytochrome Bc1 Complex, Chain C"/>
    <property type="match status" value="1"/>
</dbReference>
<dbReference type="InterPro" id="IPR005797">
    <property type="entry name" value="Cyt_b/b6_N"/>
</dbReference>
<dbReference type="InterPro" id="IPR027387">
    <property type="entry name" value="Cytb/b6-like_sf"/>
</dbReference>
<dbReference type="InterPro" id="IPR048259">
    <property type="entry name" value="Cytochrome_b_N_euk/bac"/>
</dbReference>
<dbReference type="InterPro" id="IPR016174">
    <property type="entry name" value="Di-haem_cyt_TM"/>
</dbReference>
<dbReference type="PANTHER" id="PTHR19271">
    <property type="entry name" value="CYTOCHROME B"/>
    <property type="match status" value="1"/>
</dbReference>
<dbReference type="PANTHER" id="PTHR19271:SF16">
    <property type="entry name" value="CYTOCHROME B"/>
    <property type="match status" value="1"/>
</dbReference>
<dbReference type="Pfam" id="PF00033">
    <property type="entry name" value="Cytochrome_B"/>
    <property type="match status" value="1"/>
</dbReference>
<dbReference type="SUPFAM" id="SSF81342">
    <property type="entry name" value="Transmembrane di-heme cytochromes"/>
    <property type="match status" value="1"/>
</dbReference>
<dbReference type="PROSITE" id="PS51002">
    <property type="entry name" value="CYTB_NTER"/>
    <property type="match status" value="1"/>
</dbReference>
<protein>
    <recommendedName>
        <fullName>Cytochrome b</fullName>
    </recommendedName>
    <alternativeName>
        <fullName>Complex III subunit 3</fullName>
    </alternativeName>
    <alternativeName>
        <fullName>Complex III subunit III</fullName>
    </alternativeName>
    <alternativeName>
        <fullName>Cytochrome b-c1 complex subunit 3</fullName>
    </alternativeName>
    <alternativeName>
        <fullName>Ubiquinol-cytochrome-c reductase complex cytochrome b subunit</fullName>
    </alternativeName>
</protein>
<name>CYB_AGKCO</name>
<comment type="function">
    <text evidence="2">Component of the ubiquinol-cytochrome c reductase complex (complex III or cytochrome b-c1 complex) that is part of the mitochondrial respiratory chain. The b-c1 complex mediates electron transfer from ubiquinol to cytochrome c. Contributes to the generation of a proton gradient across the mitochondrial membrane that is then used for ATP synthesis.</text>
</comment>
<comment type="cofactor">
    <cofactor evidence="2">
        <name>heme b</name>
        <dbReference type="ChEBI" id="CHEBI:60344"/>
    </cofactor>
    <text evidence="2">Binds 2 heme b groups non-covalently.</text>
</comment>
<comment type="subunit">
    <text evidence="2">The cytochrome bc1 complex contains 3 respiratory subunits (MT-CYB, CYC1 and UQCRFS1), 2 core proteins (UQCRC1 and UQCRC2) and probably 6 low-molecular weight proteins.</text>
</comment>
<comment type="subcellular location">
    <subcellularLocation>
        <location evidence="2">Mitochondrion inner membrane</location>
        <topology evidence="2">Multi-pass membrane protein</topology>
    </subcellularLocation>
</comment>
<comment type="miscellaneous">
    <text evidence="1">Heme 1 (or BL or b562) is low-potential and absorbs at about 562 nm, and heme 2 (or BH or b566) is high-potential and absorbs at about 566 nm.</text>
</comment>
<comment type="similarity">
    <text evidence="3">Belongs to the cytochrome b family.</text>
</comment>
<comment type="caution">
    <text evidence="2">The full-length protein contains only eight transmembrane helices, not nine as predicted by bioinformatics tools.</text>
</comment>
<reference key="1">
    <citation type="journal article" date="1998" name="Mol. Phylogenet. Evol.">
        <title>Weighting and congruence: a case study based on three mitochondrial genes in pitvipers.</title>
        <authorList>
            <person name="Vidal N."/>
            <person name="Lecointre G."/>
        </authorList>
    </citation>
    <scope>NUCLEOTIDE SEQUENCE [GENOMIC DNA]</scope>
</reference>
<reference key="2">
    <citation type="journal article" date="1997" name="C. R. Acad. Sci. III, Sci. Vie">
        <title>Molecular systematics of pitvipers: paraphyly of the Bothrops complex.</title>
        <authorList>
            <person name="Vidal N."/>
            <person name="Lecointre G."/>
            <person name="Vie J.-C."/>
            <person name="Gasc J.-P."/>
        </authorList>
    </citation>
    <scope>NUCLEOTIDE SEQUENCE [GENOMIC DNA] OF 1-132</scope>
</reference>
<reference key="3">
    <citation type="submission" date="1997-12" db="EMBL/GenBank/DDBJ databases">
        <title>Phylogeography of the bushmaster (Lachesis muta: viperidae): implications for neotropical biogeography, systematics, and conservation.</title>
        <authorList>
            <person name="Zamudio K.R."/>
            <person name="Greene H.W."/>
        </authorList>
    </citation>
    <scope>NUCLEOTIDE SEQUENCE [GENOMIC DNA] OF 23-114</scope>
</reference>
<feature type="chain" id="PRO_0000060536" description="Cytochrome b">
    <location>
        <begin position="1" status="less than"/>
        <end position="214" status="greater than"/>
    </location>
</feature>
<feature type="transmembrane region" description="Helical" evidence="3">
    <location>
        <begin position="31"/>
        <end position="51"/>
    </location>
</feature>
<feature type="transmembrane region" description="Helical" evidence="2">
    <location>
        <begin position="75"/>
        <end position="96"/>
    </location>
</feature>
<feature type="transmembrane region" description="Helical" evidence="2">
    <location>
        <begin position="111"/>
        <end position="131"/>
    </location>
</feature>
<feature type="transmembrane region" description="Helical" evidence="3">
    <location>
        <begin position="176"/>
        <end position="196"/>
    </location>
</feature>
<feature type="binding site" description="axial binding residue" evidence="2">
    <location>
        <position position="81"/>
    </location>
    <ligand>
        <name>heme b</name>
        <dbReference type="ChEBI" id="CHEBI:60344"/>
        <label>b562</label>
    </ligand>
    <ligandPart>
        <name>Fe</name>
        <dbReference type="ChEBI" id="CHEBI:18248"/>
    </ligandPart>
</feature>
<feature type="binding site" description="axial binding residue" evidence="2">
    <location>
        <position position="95"/>
    </location>
    <ligand>
        <name>heme b</name>
        <dbReference type="ChEBI" id="CHEBI:60344"/>
        <label>b566</label>
    </ligand>
    <ligandPart>
        <name>Fe</name>
        <dbReference type="ChEBI" id="CHEBI:18248"/>
    </ligandPart>
</feature>
<feature type="binding site" description="axial binding residue" evidence="2">
    <location>
        <position position="180"/>
    </location>
    <ligand>
        <name>heme b</name>
        <dbReference type="ChEBI" id="CHEBI:60344"/>
        <label>b562</label>
    </ligand>
    <ligandPart>
        <name>Fe</name>
        <dbReference type="ChEBI" id="CHEBI:18248"/>
    </ligandPart>
</feature>
<feature type="binding site" description="axial binding residue" evidence="2">
    <location>
        <position position="194"/>
    </location>
    <ligand>
        <name>heme b</name>
        <dbReference type="ChEBI" id="CHEBI:60344"/>
        <label>b566</label>
    </ligand>
    <ligandPart>
        <name>Fe</name>
        <dbReference type="ChEBI" id="CHEBI:18248"/>
    </ligandPart>
</feature>
<feature type="binding site" evidence="2">
    <location>
        <position position="199"/>
    </location>
    <ligand>
        <name>a ubiquinone</name>
        <dbReference type="ChEBI" id="CHEBI:16389"/>
    </ligand>
</feature>
<feature type="non-terminal residue">
    <location>
        <position position="1"/>
    </location>
</feature>
<feature type="non-terminal residue">
    <location>
        <position position="214"/>
    </location>
</feature>
<gene>
    <name type="primary">MT-CYB</name>
    <name type="synonym">COB</name>
    <name type="synonym">CYTB</name>
    <name type="synonym">MTCYB</name>
</gene>
<accession>P92845</accession>
<accession>Q9ZZ66</accession>
<sequence length="214" mass="24168">YINYKNMSHQHMLTLFNLLPVGSNISIWWNFGSMLLTCLMIQIATGFFLAIHYTANINLAFSSIIHISRDVPYGWIMQNTHAIGASLFFICIYIHIARGIYYGSYLNKEVWLSGTTLLIILMATAFFGYVLPWGQMSFWAATVITNLLTAIPYLGTTLTTWLWGGYAINDPTLTRFFALHFILPFAIISMSSIHILLLHNEGSNNPLGTNSDID</sequence>
<keyword id="KW-0249">Electron transport</keyword>
<keyword id="KW-0349">Heme</keyword>
<keyword id="KW-0408">Iron</keyword>
<keyword id="KW-0472">Membrane</keyword>
<keyword id="KW-0479">Metal-binding</keyword>
<keyword id="KW-0496">Mitochondrion</keyword>
<keyword id="KW-0999">Mitochondrion inner membrane</keyword>
<keyword id="KW-0679">Respiratory chain</keyword>
<keyword id="KW-0812">Transmembrane</keyword>
<keyword id="KW-1133">Transmembrane helix</keyword>
<keyword id="KW-0813">Transport</keyword>
<keyword id="KW-0830">Ubiquinone</keyword>
<organism>
    <name type="scientific">Agkistrodon contortrix contortrix</name>
    <name type="common">Southern copperhead</name>
    <dbReference type="NCBI Taxonomy" id="8713"/>
    <lineage>
        <taxon>Eukaryota</taxon>
        <taxon>Metazoa</taxon>
        <taxon>Chordata</taxon>
        <taxon>Craniata</taxon>
        <taxon>Vertebrata</taxon>
        <taxon>Euteleostomi</taxon>
        <taxon>Lepidosauria</taxon>
        <taxon>Squamata</taxon>
        <taxon>Bifurcata</taxon>
        <taxon>Unidentata</taxon>
        <taxon>Episquamata</taxon>
        <taxon>Toxicofera</taxon>
        <taxon>Serpentes</taxon>
        <taxon>Colubroidea</taxon>
        <taxon>Viperidae</taxon>
        <taxon>Crotalinae</taxon>
        <taxon>Agkistrodon</taxon>
    </lineage>
</organism>